<accession>A0A2L0WUE7</accession>
<dbReference type="EMBL" id="MG489826">
    <property type="protein sequence ID" value="AVA31271.1"/>
    <property type="molecule type" value="mRNA"/>
</dbReference>
<dbReference type="SMR" id="A0A2L0WUE7"/>
<dbReference type="GO" id="GO:0005576">
    <property type="term" value="C:extracellular region"/>
    <property type="evidence" value="ECO:0007669"/>
    <property type="project" value="UniProtKB-SubCell"/>
</dbReference>
<dbReference type="GO" id="GO:0033645">
    <property type="term" value="C:host cell endomembrane system"/>
    <property type="evidence" value="ECO:0007669"/>
    <property type="project" value="UniProtKB-SubCell"/>
</dbReference>
<dbReference type="GO" id="GO:0020002">
    <property type="term" value="C:host cell plasma membrane"/>
    <property type="evidence" value="ECO:0007669"/>
    <property type="project" value="UniProtKB-SubCell"/>
</dbReference>
<dbReference type="GO" id="GO:0016020">
    <property type="term" value="C:membrane"/>
    <property type="evidence" value="ECO:0007669"/>
    <property type="project" value="UniProtKB-KW"/>
</dbReference>
<dbReference type="InterPro" id="IPR031825">
    <property type="entry name" value="RXLR"/>
</dbReference>
<dbReference type="Pfam" id="PF16810">
    <property type="entry name" value="RXLR"/>
    <property type="match status" value="1"/>
</dbReference>
<proteinExistence type="evidence at protein level"/>
<protein>
    <recommendedName>
        <fullName evidence="3">RxLR effector protein 24</fullName>
    </recommendedName>
</protein>
<reference key="1">
    <citation type="journal article" date="2018" name="Plant J.">
        <title>A conserved RxLR effector interacts with host RABA-type GTPases to inhibit vesicle-mediated secretion of antimicrobial proteins.</title>
        <authorList>
            <person name="Tomczynska I."/>
            <person name="Stumpe M."/>
            <person name="Mauch F."/>
        </authorList>
    </citation>
    <scope>NUCLEOTIDE SEQUENCE [MRNA]</scope>
    <scope>FUNCTION</scope>
    <scope>INDUCTION</scope>
    <scope>SUBCELLULAR LOCATION</scope>
    <scope>DOMAIN</scope>
    <scope>INTERACTION WITH HOST RABA1A; RABA1B; RABA1C; RABA1D; RABA1F; RABA2A; RABA2C; RABA2D; RABA4A; RABA4B AND RABA4C</scope>
    <scope>MUTAGENESIS OF 105-GLU--THR-155</scope>
</reference>
<keyword id="KW-1032">Host cell membrane</keyword>
<keyword id="KW-1043">Host membrane</keyword>
<keyword id="KW-0472">Membrane</keyword>
<keyword id="KW-0964">Secreted</keyword>
<keyword id="KW-0732">Signal</keyword>
<keyword id="KW-0843">Virulence</keyword>
<gene>
    <name evidence="3" type="primary">RxLR24</name>
</gene>
<name>RLR24_PHYBB</name>
<sequence length="155" mass="17649">MRLLIWVLFVTLVTFVSNTTATSTFTDPQVTSGDIEALTHLLDVESNADAKRFLRTESKNDLKSDADTNGIDIEDEERGFIPSSITNAFSKMKTGWSNFKSNQFEKAFQRMNQKGETPTTLAKRLDIGKTAEKRFEKTYEKYTAWWINHHTNAGT</sequence>
<comment type="function">
    <text evidence="2">Effector protein that contributes to pathogen virulence (PubMed:29671919). Targets members of the RABA GTPases subfamily to inhibit vesicular secretion, leading to an accumulation of secretory proteins in the endoplasmic reticulum (PubMed:29671919).</text>
</comment>
<comment type="subunit">
    <text evidence="2">Interacts with Arabidopsis thaliana RABA GTPases including RABA1a, RABA1b, RABA1c, RABA1d, RABA1f, RABA2a, RABA2c, RABA2d, RABA4a, RABA4b and RABA4c.</text>
</comment>
<comment type="subcellular location">
    <subcellularLocation>
        <location evidence="2">Secreted</location>
    </subcellularLocation>
    <subcellularLocation>
        <location evidence="2">Host cell membrane</location>
    </subcellularLocation>
    <subcellularLocation>
        <location evidence="2">Host endomembrane system</location>
    </subcellularLocation>
    <text evidence="5">The subcellular localization to plasma and vesicular membranes is most likely the result of binding of RxLR24 to membrane-localized RABA proteins.</text>
</comment>
<comment type="induction">
    <text evidence="2">Expressed early in the interaction with Arabidopsis plants.</text>
</comment>
<comment type="domain">
    <text evidence="5">The RxLR-dEER motif acts to carry the protein into the host cell cytoplasm through binding to cell surface phosphatidylinositol-3-phosphate.</text>
</comment>
<comment type="domain">
    <text evidence="2">The C-terminal part (residues 105 to 155) is required for the binding to RABA GTPasesproteins, causes redirection of the truncated effector to the cytoplasm, and leads tio the loss of the ability to inhibit the host secretory pathway.</text>
</comment>
<comment type="similarity">
    <text evidence="4">Belongs to the RxLR effector family.</text>
</comment>
<evidence type="ECO:0000255" key="1"/>
<evidence type="ECO:0000269" key="2">
    <source>
    </source>
</evidence>
<evidence type="ECO:0000303" key="3">
    <source>
    </source>
</evidence>
<evidence type="ECO:0000305" key="4"/>
<evidence type="ECO:0000305" key="5">
    <source>
    </source>
</evidence>
<organism>
    <name type="scientific">Phytophthora brassicae</name>
    <dbReference type="NCBI Taxonomy" id="187813"/>
    <lineage>
        <taxon>Eukaryota</taxon>
        <taxon>Sar</taxon>
        <taxon>Stramenopiles</taxon>
        <taxon>Oomycota</taxon>
        <taxon>Peronosporales</taxon>
        <taxon>Peronosporaceae</taxon>
        <taxon>Phytophthora</taxon>
    </lineage>
</organism>
<feature type="signal peptide" evidence="1">
    <location>
        <begin position="1"/>
        <end position="21"/>
    </location>
</feature>
<feature type="chain" id="PRO_5014856474" description="RxLR effector protein 24">
    <location>
        <begin position="22"/>
        <end position="155"/>
    </location>
</feature>
<feature type="region of interest" description="RABA-binding domain" evidence="5">
    <location>
        <begin position="105"/>
        <end position="155"/>
    </location>
</feature>
<feature type="short sequence motif" description="RxLR-dEER" evidence="5">
    <location>
        <begin position="52"/>
        <end position="78"/>
    </location>
</feature>
<feature type="mutagenesis site" description="Abolishes binding to RABA GTPases and causes redirection of the truncated effector to the cytoplasm." evidence="2">
    <location>
        <begin position="105"/>
        <end position="155"/>
    </location>
</feature>